<name>ARXS2_MOUSE</name>
<proteinExistence type="evidence at protein level"/>
<keyword id="KW-0256">Endoplasmic reticulum</keyword>
<keyword id="KW-0325">Glycoprotein</keyword>
<keyword id="KW-0472">Membrane</keyword>
<keyword id="KW-1185">Reference proteome</keyword>
<keyword id="KW-0735">Signal-anchor</keyword>
<keyword id="KW-0812">Transmembrane</keyword>
<keyword id="KW-1133">Transmembrane helix</keyword>
<comment type="function">
    <text evidence="2">Plays a role in adipogenesis.</text>
</comment>
<comment type="subcellular location">
    <subcellularLocation>
        <location evidence="2">Endoplasmic reticulum membrane</location>
        <topology evidence="4">Single-pass type II membrane protein</topology>
    </subcellularLocation>
</comment>
<comment type="tissue specificity">
    <text evidence="2">Strongly expressed in epididymal white and brown adipose tissue with low levels in heart.</text>
</comment>
<comment type="developmental stage">
    <text evidence="2">Strongly up-regulated during adipogenesis.</text>
</comment>
<comment type="induction">
    <text evidence="2">By the PPARG agonist rosiglitazone.</text>
</comment>
<comment type="miscellaneous">
    <text evidence="3">Arxes1 and Arxes2 appear to have arisen by retrotransposition of the signal peptidase Spcs3 followed by a segmental duplication event.</text>
</comment>
<comment type="similarity">
    <text evidence="4">Belongs to the SPCS3 family.</text>
</comment>
<evidence type="ECO:0000255" key="1"/>
<evidence type="ECO:0000269" key="2">
    <source>
    </source>
</evidence>
<evidence type="ECO:0000303" key="3">
    <source>
    </source>
</evidence>
<evidence type="ECO:0000305" key="4"/>
<evidence type="ECO:0000312" key="5">
    <source>
        <dbReference type="MGI" id="MGI:1924226"/>
    </source>
</evidence>
<gene>
    <name evidence="3 5" type="primary">Arxes2</name>
</gene>
<protein>
    <recommendedName>
        <fullName evidence="3">Adipocyte-related X-chromosome expressed sequence 2</fullName>
    </recommendedName>
</protein>
<dbReference type="EMBL" id="AK013740">
    <property type="protein sequence ID" value="BAB28979.1"/>
    <property type="molecule type" value="mRNA"/>
</dbReference>
<dbReference type="EMBL" id="AK077432">
    <property type="protein sequence ID" value="BAC36797.1"/>
    <property type="molecule type" value="mRNA"/>
</dbReference>
<dbReference type="EMBL" id="AL671914">
    <property type="status" value="NOT_ANNOTATED_CDS"/>
    <property type="molecule type" value="Genomic_DNA"/>
</dbReference>
<dbReference type="EMBL" id="CH466616">
    <property type="protein sequence ID" value="EDL23842.1"/>
    <property type="molecule type" value="Genomic_DNA"/>
</dbReference>
<dbReference type="EMBL" id="CH466616">
    <property type="protein sequence ID" value="EDL23843.1"/>
    <property type="molecule type" value="Genomic_DNA"/>
</dbReference>
<dbReference type="CCDS" id="CCDS30411.1"/>
<dbReference type="RefSeq" id="NP_084099.1">
    <property type="nucleotide sequence ID" value="NM_029823.2"/>
</dbReference>
<dbReference type="SMR" id="C0HK80"/>
<dbReference type="FunCoup" id="C0HK80">
    <property type="interactions" value="366"/>
</dbReference>
<dbReference type="GlyCosmos" id="C0HK80">
    <property type="glycosylation" value="1 site, No reported glycans"/>
</dbReference>
<dbReference type="GlyGen" id="C0HK80">
    <property type="glycosylation" value="1 site"/>
</dbReference>
<dbReference type="iPTMnet" id="C0HK80"/>
<dbReference type="PhosphoSitePlus" id="C0HK80"/>
<dbReference type="jPOST" id="C0HK80"/>
<dbReference type="ProteomicsDB" id="265112"/>
<dbReference type="Pumba" id="C0HK80"/>
<dbReference type="DNASU" id="76219"/>
<dbReference type="Ensembl" id="ENSMUST00000057625.3">
    <property type="protein sequence ID" value="ENSMUSP00000062660.3"/>
    <property type="gene ID" value="ENSMUSG00000048355.3"/>
</dbReference>
<dbReference type="Ensembl" id="ENSMUST00000058119.9">
    <property type="protein sequence ID" value="ENSMUSP00000051250.8"/>
    <property type="gene ID" value="ENSMUSG00000048040.9"/>
</dbReference>
<dbReference type="GeneID" id="76976"/>
<dbReference type="KEGG" id="mmu:76219"/>
<dbReference type="KEGG" id="mmu:76976"/>
<dbReference type="AGR" id="MGI:1924226"/>
<dbReference type="CTD" id="76219"/>
<dbReference type="CTD" id="76976"/>
<dbReference type="MGI" id="MGI:1924226">
    <property type="gene designation" value="Arxes2"/>
</dbReference>
<dbReference type="VEuPathDB" id="HostDB:ENSMUSG00000048040"/>
<dbReference type="VEuPathDB" id="HostDB:ENSMUSG00000048355"/>
<dbReference type="GeneTree" id="ENSGT00390000009223"/>
<dbReference type="InParanoid" id="C0HK80"/>
<dbReference type="OMA" id="AFDWSTH"/>
<dbReference type="OrthoDB" id="9552240at2759"/>
<dbReference type="BioGRID-ORCS" id="76219">
    <property type="hits" value="1 hit in 38 CRISPR screens"/>
</dbReference>
<dbReference type="BioGRID-ORCS" id="76976">
    <property type="hits" value="2 hits in 36 CRISPR screens"/>
</dbReference>
<dbReference type="PRO" id="PR:C0HK80"/>
<dbReference type="Proteomes" id="UP000000589">
    <property type="component" value="Chromosome X"/>
</dbReference>
<dbReference type="RNAct" id="C0HK80">
    <property type="molecule type" value="protein"/>
</dbReference>
<dbReference type="Bgee" id="ENSMUSG00000048040">
    <property type="expression patterns" value="Expressed in gonadal fat pad and 260 other cell types or tissues"/>
</dbReference>
<dbReference type="ExpressionAtlas" id="C0HK80">
    <property type="expression patterns" value="baseline and differential"/>
</dbReference>
<dbReference type="GO" id="GO:0005783">
    <property type="term" value="C:endoplasmic reticulum"/>
    <property type="evidence" value="ECO:0000314"/>
    <property type="project" value="MGI"/>
</dbReference>
<dbReference type="GO" id="GO:0005787">
    <property type="term" value="C:signal peptidase complex"/>
    <property type="evidence" value="ECO:0007669"/>
    <property type="project" value="InterPro"/>
</dbReference>
<dbReference type="GO" id="GO:0045444">
    <property type="term" value="P:fat cell differentiation"/>
    <property type="evidence" value="ECO:0000315"/>
    <property type="project" value="MGI"/>
</dbReference>
<dbReference type="GO" id="GO:0006465">
    <property type="term" value="P:signal peptide processing"/>
    <property type="evidence" value="ECO:0007669"/>
    <property type="project" value="InterPro"/>
</dbReference>
<dbReference type="InterPro" id="IPR007653">
    <property type="entry name" value="SPC3"/>
</dbReference>
<dbReference type="PANTHER" id="PTHR12804:SF6">
    <property type="entry name" value="ADIPOCYTE-RELATED X-CHROMOSOME EXPRESSED SEQUENCE 1-RELATED"/>
    <property type="match status" value="1"/>
</dbReference>
<dbReference type="PANTHER" id="PTHR12804">
    <property type="entry name" value="MICROSOMAL SIGNAL PEPTIDASE 23 KD SUBUNIT SPC22/23"/>
    <property type="match status" value="1"/>
</dbReference>
<dbReference type="Pfam" id="PF04573">
    <property type="entry name" value="SPC22"/>
    <property type="match status" value="1"/>
</dbReference>
<dbReference type="PIRSF" id="PIRSF016089">
    <property type="entry name" value="SPC22"/>
    <property type="match status" value="1"/>
</dbReference>
<feature type="chain" id="PRO_0000438511" description="Adipocyte-related X-chromosome expressed sequence 2">
    <location>
        <begin position="1"/>
        <end position="180"/>
    </location>
</feature>
<feature type="topological domain" description="Cytoplasmic" evidence="1">
    <location>
        <begin position="1"/>
        <end position="11"/>
    </location>
</feature>
<feature type="transmembrane region" description="Helical; Signal-anchor for type II membrane protein" evidence="1">
    <location>
        <begin position="12"/>
        <end position="32"/>
    </location>
</feature>
<feature type="topological domain" description="Lumenal" evidence="1">
    <location>
        <begin position="33"/>
        <end position="180"/>
    </location>
</feature>
<feature type="glycosylation site" description="N-linked (GlcNAc...) asparagine" evidence="1">
    <location>
        <position position="141"/>
    </location>
</feature>
<feature type="sequence conflict" description="In Ref. 1; BAB28979." evidence="4" ref="1">
    <original>S</original>
    <variation>P</variation>
    <location>
        <position position="3"/>
    </location>
</feature>
<feature type="sequence conflict" description="In Ref. 1; BAB28979." evidence="4" ref="1">
    <original>S</original>
    <variation>P</variation>
    <location>
        <position position="10"/>
    </location>
</feature>
<feature type="sequence conflict" description="In Ref. 1; BAB28979." evidence="4" ref="1">
    <original>F</original>
    <variation>P</variation>
    <location>
        <position position="14"/>
    </location>
</feature>
<feature type="sequence conflict" description="In Ref. 1; BAB28979." evidence="4" ref="1">
    <original>L</original>
    <variation>P</variation>
    <location>
        <position position="24"/>
    </location>
</feature>
<feature type="sequence conflict" description="In Ref. 1; BAB28979." evidence="4" ref="1">
    <original>L</original>
    <variation>M</variation>
    <location>
        <position position="41"/>
    </location>
</feature>
<feature type="sequence conflict" description="In Ref. 1; BAC36797." evidence="4" ref="1">
    <original>K</original>
    <variation>N</variation>
    <location>
        <position position="59"/>
    </location>
</feature>
<organism>
    <name type="scientific">Mus musculus</name>
    <name type="common">Mouse</name>
    <dbReference type="NCBI Taxonomy" id="10090"/>
    <lineage>
        <taxon>Eukaryota</taxon>
        <taxon>Metazoa</taxon>
        <taxon>Chordata</taxon>
        <taxon>Craniata</taxon>
        <taxon>Vertebrata</taxon>
        <taxon>Euteleostomi</taxon>
        <taxon>Mammalia</taxon>
        <taxon>Eutheria</taxon>
        <taxon>Euarchontoglires</taxon>
        <taxon>Glires</taxon>
        <taxon>Rodentia</taxon>
        <taxon>Myomorpha</taxon>
        <taxon>Muroidea</taxon>
        <taxon>Muridae</taxon>
        <taxon>Murinae</taxon>
        <taxon>Mus</taxon>
        <taxon>Mus</taxon>
    </lineage>
</organism>
<accession>C0HK80</accession>
<accession>B1AUR7</accession>
<accession>Q8BK31</accession>
<accession>Q9D365</accession>
<accession>Q9D6F2</accession>
<sequence>MNSLLSRANSLFAFTLSVMAALTLGCILTTAFKDRSAPVRLHVSRILLKKVEDFTGPRKKSDLGFITFHISADLEKTFDWNVKQLFLYLSAEYSTKSNAVNQVVLWDKILLRGENPKLNLKDVKSKYFFFDDGHGLKGNRNVTLTLSWQVIPIAGILPLVTGSGRVSVPFPDSYEIATTF</sequence>
<reference key="1">
    <citation type="journal article" date="2005" name="Science">
        <title>The transcriptional landscape of the mammalian genome.</title>
        <authorList>
            <person name="Carninci P."/>
            <person name="Kasukawa T."/>
            <person name="Katayama S."/>
            <person name="Gough J."/>
            <person name="Frith M.C."/>
            <person name="Maeda N."/>
            <person name="Oyama R."/>
            <person name="Ravasi T."/>
            <person name="Lenhard B."/>
            <person name="Wells C."/>
            <person name="Kodzius R."/>
            <person name="Shimokawa K."/>
            <person name="Bajic V.B."/>
            <person name="Brenner S.E."/>
            <person name="Batalov S."/>
            <person name="Forrest A.R."/>
            <person name="Zavolan M."/>
            <person name="Davis M.J."/>
            <person name="Wilming L.G."/>
            <person name="Aidinis V."/>
            <person name="Allen J.E."/>
            <person name="Ambesi-Impiombato A."/>
            <person name="Apweiler R."/>
            <person name="Aturaliya R.N."/>
            <person name="Bailey T.L."/>
            <person name="Bansal M."/>
            <person name="Baxter L."/>
            <person name="Beisel K.W."/>
            <person name="Bersano T."/>
            <person name="Bono H."/>
            <person name="Chalk A.M."/>
            <person name="Chiu K.P."/>
            <person name="Choudhary V."/>
            <person name="Christoffels A."/>
            <person name="Clutterbuck D.R."/>
            <person name="Crowe M.L."/>
            <person name="Dalla E."/>
            <person name="Dalrymple B.P."/>
            <person name="de Bono B."/>
            <person name="Della Gatta G."/>
            <person name="di Bernardo D."/>
            <person name="Down T."/>
            <person name="Engstrom P."/>
            <person name="Fagiolini M."/>
            <person name="Faulkner G."/>
            <person name="Fletcher C.F."/>
            <person name="Fukushima T."/>
            <person name="Furuno M."/>
            <person name="Futaki S."/>
            <person name="Gariboldi M."/>
            <person name="Georgii-Hemming P."/>
            <person name="Gingeras T.R."/>
            <person name="Gojobori T."/>
            <person name="Green R.E."/>
            <person name="Gustincich S."/>
            <person name="Harbers M."/>
            <person name="Hayashi Y."/>
            <person name="Hensch T.K."/>
            <person name="Hirokawa N."/>
            <person name="Hill D."/>
            <person name="Huminiecki L."/>
            <person name="Iacono M."/>
            <person name="Ikeo K."/>
            <person name="Iwama A."/>
            <person name="Ishikawa T."/>
            <person name="Jakt M."/>
            <person name="Kanapin A."/>
            <person name="Katoh M."/>
            <person name="Kawasawa Y."/>
            <person name="Kelso J."/>
            <person name="Kitamura H."/>
            <person name="Kitano H."/>
            <person name="Kollias G."/>
            <person name="Krishnan S.P."/>
            <person name="Kruger A."/>
            <person name="Kummerfeld S.K."/>
            <person name="Kurochkin I.V."/>
            <person name="Lareau L.F."/>
            <person name="Lazarevic D."/>
            <person name="Lipovich L."/>
            <person name="Liu J."/>
            <person name="Liuni S."/>
            <person name="McWilliam S."/>
            <person name="Madan Babu M."/>
            <person name="Madera M."/>
            <person name="Marchionni L."/>
            <person name="Matsuda H."/>
            <person name="Matsuzawa S."/>
            <person name="Miki H."/>
            <person name="Mignone F."/>
            <person name="Miyake S."/>
            <person name="Morris K."/>
            <person name="Mottagui-Tabar S."/>
            <person name="Mulder N."/>
            <person name="Nakano N."/>
            <person name="Nakauchi H."/>
            <person name="Ng P."/>
            <person name="Nilsson R."/>
            <person name="Nishiguchi S."/>
            <person name="Nishikawa S."/>
            <person name="Nori F."/>
            <person name="Ohara O."/>
            <person name="Okazaki Y."/>
            <person name="Orlando V."/>
            <person name="Pang K.C."/>
            <person name="Pavan W.J."/>
            <person name="Pavesi G."/>
            <person name="Pesole G."/>
            <person name="Petrovsky N."/>
            <person name="Piazza S."/>
            <person name="Reed J."/>
            <person name="Reid J.F."/>
            <person name="Ring B.Z."/>
            <person name="Ringwald M."/>
            <person name="Rost B."/>
            <person name="Ruan Y."/>
            <person name="Salzberg S.L."/>
            <person name="Sandelin A."/>
            <person name="Schneider C."/>
            <person name="Schoenbach C."/>
            <person name="Sekiguchi K."/>
            <person name="Semple C.A."/>
            <person name="Seno S."/>
            <person name="Sessa L."/>
            <person name="Sheng Y."/>
            <person name="Shibata Y."/>
            <person name="Shimada H."/>
            <person name="Shimada K."/>
            <person name="Silva D."/>
            <person name="Sinclair B."/>
            <person name="Sperling S."/>
            <person name="Stupka E."/>
            <person name="Sugiura K."/>
            <person name="Sultana R."/>
            <person name="Takenaka Y."/>
            <person name="Taki K."/>
            <person name="Tammoja K."/>
            <person name="Tan S.L."/>
            <person name="Tang S."/>
            <person name="Taylor M.S."/>
            <person name="Tegner J."/>
            <person name="Teichmann S.A."/>
            <person name="Ueda H.R."/>
            <person name="van Nimwegen E."/>
            <person name="Verardo R."/>
            <person name="Wei C.L."/>
            <person name="Yagi K."/>
            <person name="Yamanishi H."/>
            <person name="Zabarovsky E."/>
            <person name="Zhu S."/>
            <person name="Zimmer A."/>
            <person name="Hide W."/>
            <person name="Bult C."/>
            <person name="Grimmond S.M."/>
            <person name="Teasdale R.D."/>
            <person name="Liu E.T."/>
            <person name="Brusic V."/>
            <person name="Quackenbush J."/>
            <person name="Wahlestedt C."/>
            <person name="Mattick J.S."/>
            <person name="Hume D.A."/>
            <person name="Kai C."/>
            <person name="Sasaki D."/>
            <person name="Tomaru Y."/>
            <person name="Fukuda S."/>
            <person name="Kanamori-Katayama M."/>
            <person name="Suzuki M."/>
            <person name="Aoki J."/>
            <person name="Arakawa T."/>
            <person name="Iida J."/>
            <person name="Imamura K."/>
            <person name="Itoh M."/>
            <person name="Kato T."/>
            <person name="Kawaji H."/>
            <person name="Kawagashira N."/>
            <person name="Kawashima T."/>
            <person name="Kojima M."/>
            <person name="Kondo S."/>
            <person name="Konno H."/>
            <person name="Nakano K."/>
            <person name="Ninomiya N."/>
            <person name="Nishio T."/>
            <person name="Okada M."/>
            <person name="Plessy C."/>
            <person name="Shibata K."/>
            <person name="Shiraki T."/>
            <person name="Suzuki S."/>
            <person name="Tagami M."/>
            <person name="Waki K."/>
            <person name="Watahiki A."/>
            <person name="Okamura-Oho Y."/>
            <person name="Suzuki H."/>
            <person name="Kawai J."/>
            <person name="Hayashizaki Y."/>
        </authorList>
    </citation>
    <scope>NUCLEOTIDE SEQUENCE [LARGE SCALE MRNA]</scope>
    <source>
        <strain>C57BL/6J</strain>
        <tissue>Embryo</tissue>
        <tissue>Hippocampus</tissue>
    </source>
</reference>
<reference key="2">
    <citation type="journal article" date="2009" name="PLoS Biol.">
        <title>Lineage-specific biology revealed by a finished genome assembly of the mouse.</title>
        <authorList>
            <person name="Church D.M."/>
            <person name="Goodstadt L."/>
            <person name="Hillier L.W."/>
            <person name="Zody M.C."/>
            <person name="Goldstein S."/>
            <person name="She X."/>
            <person name="Bult C.J."/>
            <person name="Agarwala R."/>
            <person name="Cherry J.L."/>
            <person name="DiCuccio M."/>
            <person name="Hlavina W."/>
            <person name="Kapustin Y."/>
            <person name="Meric P."/>
            <person name="Maglott D."/>
            <person name="Birtle Z."/>
            <person name="Marques A.C."/>
            <person name="Graves T."/>
            <person name="Zhou S."/>
            <person name="Teague B."/>
            <person name="Potamousis K."/>
            <person name="Churas C."/>
            <person name="Place M."/>
            <person name="Herschleb J."/>
            <person name="Runnheim R."/>
            <person name="Forrest D."/>
            <person name="Amos-Landgraf J."/>
            <person name="Schwartz D.C."/>
            <person name="Cheng Z."/>
            <person name="Lindblad-Toh K."/>
            <person name="Eichler E.E."/>
            <person name="Ponting C.P."/>
        </authorList>
    </citation>
    <scope>NUCLEOTIDE SEQUENCE [LARGE SCALE GENOMIC DNA]</scope>
    <source>
        <strain>C57BL/6J</strain>
    </source>
</reference>
<reference key="3">
    <citation type="submission" date="2005-07" db="EMBL/GenBank/DDBJ databases">
        <authorList>
            <person name="Mural R.J."/>
            <person name="Adams M.D."/>
            <person name="Myers E.W."/>
            <person name="Smith H.O."/>
            <person name="Venter J.C."/>
        </authorList>
    </citation>
    <scope>NUCLEOTIDE SEQUENCE [LARGE SCALE GENOMIC DNA]</scope>
</reference>
<reference key="4">
    <citation type="journal article" date="2010" name="Cell">
        <title>A tissue-specific atlas of mouse protein phosphorylation and expression.</title>
        <authorList>
            <person name="Huttlin E.L."/>
            <person name="Jedrychowski M.P."/>
            <person name="Elias J.E."/>
            <person name="Goswami T."/>
            <person name="Rad R."/>
            <person name="Beausoleil S.A."/>
            <person name="Villen J."/>
            <person name="Haas W."/>
            <person name="Sowa M.E."/>
            <person name="Gygi S.P."/>
        </authorList>
    </citation>
    <scope>IDENTIFICATION BY MASS SPECTROMETRY [LARGE SCALE ANALYSIS]</scope>
    <source>
        <tissue>Brain</tissue>
        <tissue>Brown adipose tissue</tissue>
        <tissue>Kidney</tissue>
        <tissue>Lung</tissue>
        <tissue>Testis</tissue>
    </source>
</reference>
<reference key="5">
    <citation type="journal article" date="2011" name="Nucleic Acids Res.">
        <title>Arxes: retrotransposed genes required for adipogenesis.</title>
        <authorList>
            <person name="Prokesch A."/>
            <person name="Bogner-Strauss J.G."/>
            <person name="Hackl H."/>
            <person name="Rieder D."/>
            <person name="Neuhold C."/>
            <person name="Walenta E."/>
            <person name="Krogsdam A."/>
            <person name="Scheideler M."/>
            <person name="Papak C."/>
            <person name="Wong W.C."/>
            <person name="Vinson C."/>
            <person name="Eisenhaber F."/>
            <person name="Trajanoski Z."/>
        </authorList>
    </citation>
    <scope>FUNCTION</scope>
    <scope>SUBCELLULAR LOCATION</scope>
    <scope>TISSUE SPECIFICITY</scope>
    <scope>DEVELOPMENTAL STAGE</scope>
    <scope>INDUCTION</scope>
</reference>